<reference key="1">
    <citation type="submission" date="2007-05" db="EMBL/GenBank/DDBJ databases">
        <title>Complete sequence of Dehalococcoides sp. BAV1.</title>
        <authorList>
            <consortium name="US DOE Joint Genome Institute"/>
            <person name="Copeland A."/>
            <person name="Lucas S."/>
            <person name="Lapidus A."/>
            <person name="Barry K."/>
            <person name="Detter J.C."/>
            <person name="Glavina del Rio T."/>
            <person name="Hammon N."/>
            <person name="Israni S."/>
            <person name="Pitluck S."/>
            <person name="Lowry S."/>
            <person name="Clum A."/>
            <person name="Schmutz J."/>
            <person name="Larimer F."/>
            <person name="Land M."/>
            <person name="Hauser L."/>
            <person name="Kyrpides N."/>
            <person name="Kim E."/>
            <person name="Ritalahti K.M."/>
            <person name="Loeffler F."/>
            <person name="Richardson P."/>
        </authorList>
    </citation>
    <scope>NUCLEOTIDE SEQUENCE [LARGE SCALE GENOMIC DNA]</scope>
    <source>
        <strain>ATCC BAA-2100 / JCM 16839 / KCTC 5957 / BAV1</strain>
    </source>
</reference>
<evidence type="ECO:0000255" key="1">
    <source>
        <dbReference type="HAMAP-Rule" id="MF_00693"/>
    </source>
</evidence>
<comment type="subcellular location">
    <subcellularLocation>
        <location evidence="1">Cytoplasm</location>
    </subcellularLocation>
</comment>
<comment type="similarity">
    <text evidence="1">Belongs to the TACO1 family.</text>
</comment>
<gene>
    <name type="ordered locus">DehaBAV1_0421</name>
</gene>
<feature type="chain" id="PRO_1000083153" description="Probable transcriptional regulatory protein DehaBAV1_0421">
    <location>
        <begin position="1"/>
        <end position="251"/>
    </location>
</feature>
<protein>
    <recommendedName>
        <fullName evidence="1">Probable transcriptional regulatory protein DehaBAV1_0421</fullName>
    </recommendedName>
</protein>
<name>Y421_DEHMB</name>
<proteinExistence type="inferred from homology"/>
<accession>A5FS26</accession>
<sequence length="251" mass="27274">MSGHSKWATIKHAKGAADAKRGQLFTKLSREIIFAAKQGGPSPEGNARLRLAIQKAKDSRMPSDNIERAIKKGSGELEGTTVIEMILEGYGPGGVAVLVNGMSDNRNRTVSDVRHMFSKGGGSLAESGAVSWIFEAKGVIGVETARLDTDELSLKAIDMGAEDVNTDEGYMEIYTAMPDMEKIRQQLETQGVTIDSAEINMVPKNTVKLDEETAMQVLKLLDKLEELDDVQTVSSNADFDPEVVEKYHSQA</sequence>
<organism>
    <name type="scientific">Dehalococcoides mccartyi (strain ATCC BAA-2100 / JCM 16839 / KCTC 5957 / BAV1)</name>
    <dbReference type="NCBI Taxonomy" id="216389"/>
    <lineage>
        <taxon>Bacteria</taxon>
        <taxon>Bacillati</taxon>
        <taxon>Chloroflexota</taxon>
        <taxon>Dehalococcoidia</taxon>
        <taxon>Dehalococcoidales</taxon>
        <taxon>Dehalococcoidaceae</taxon>
        <taxon>Dehalococcoides</taxon>
    </lineage>
</organism>
<dbReference type="EMBL" id="CP000688">
    <property type="protein sequence ID" value="ABQ17006.1"/>
    <property type="molecule type" value="Genomic_DNA"/>
</dbReference>
<dbReference type="SMR" id="A5FS26"/>
<dbReference type="KEGG" id="deb:DehaBAV1_0421"/>
<dbReference type="PATRIC" id="fig|216389.18.peg.464"/>
<dbReference type="HOGENOM" id="CLU_062974_2_2_0"/>
<dbReference type="GO" id="GO:0005829">
    <property type="term" value="C:cytosol"/>
    <property type="evidence" value="ECO:0007669"/>
    <property type="project" value="TreeGrafter"/>
</dbReference>
<dbReference type="GO" id="GO:0003677">
    <property type="term" value="F:DNA binding"/>
    <property type="evidence" value="ECO:0007669"/>
    <property type="project" value="UniProtKB-UniRule"/>
</dbReference>
<dbReference type="GO" id="GO:0006355">
    <property type="term" value="P:regulation of DNA-templated transcription"/>
    <property type="evidence" value="ECO:0007669"/>
    <property type="project" value="UniProtKB-UniRule"/>
</dbReference>
<dbReference type="FunFam" id="1.10.10.200:FF:000002">
    <property type="entry name" value="Probable transcriptional regulatory protein CLM62_37755"/>
    <property type="match status" value="1"/>
</dbReference>
<dbReference type="FunFam" id="3.30.70.980:FF:000002">
    <property type="entry name" value="Probable transcriptional regulatory protein YebC"/>
    <property type="match status" value="1"/>
</dbReference>
<dbReference type="Gene3D" id="1.10.10.200">
    <property type="match status" value="1"/>
</dbReference>
<dbReference type="Gene3D" id="3.30.70.980">
    <property type="match status" value="2"/>
</dbReference>
<dbReference type="HAMAP" id="MF_00693">
    <property type="entry name" value="Transcrip_reg_TACO1"/>
    <property type="match status" value="1"/>
</dbReference>
<dbReference type="InterPro" id="IPR017856">
    <property type="entry name" value="Integrase-like_N"/>
</dbReference>
<dbReference type="InterPro" id="IPR048300">
    <property type="entry name" value="TACO1_YebC-like_2nd/3rd_dom"/>
</dbReference>
<dbReference type="InterPro" id="IPR049083">
    <property type="entry name" value="TACO1_YebC_N"/>
</dbReference>
<dbReference type="InterPro" id="IPR002876">
    <property type="entry name" value="Transcrip_reg_TACO1-like"/>
</dbReference>
<dbReference type="InterPro" id="IPR026564">
    <property type="entry name" value="Transcrip_reg_TACO1-like_dom3"/>
</dbReference>
<dbReference type="InterPro" id="IPR029072">
    <property type="entry name" value="YebC-like"/>
</dbReference>
<dbReference type="NCBIfam" id="NF001030">
    <property type="entry name" value="PRK00110.1"/>
    <property type="match status" value="1"/>
</dbReference>
<dbReference type="NCBIfam" id="NF009044">
    <property type="entry name" value="PRK12378.1"/>
    <property type="match status" value="1"/>
</dbReference>
<dbReference type="NCBIfam" id="TIGR01033">
    <property type="entry name" value="YebC/PmpR family DNA-binding transcriptional regulator"/>
    <property type="match status" value="1"/>
</dbReference>
<dbReference type="PANTHER" id="PTHR12532:SF6">
    <property type="entry name" value="TRANSCRIPTIONAL REGULATORY PROTEIN YEBC-RELATED"/>
    <property type="match status" value="1"/>
</dbReference>
<dbReference type="PANTHER" id="PTHR12532">
    <property type="entry name" value="TRANSLATIONAL ACTIVATOR OF CYTOCHROME C OXIDASE 1"/>
    <property type="match status" value="1"/>
</dbReference>
<dbReference type="Pfam" id="PF20772">
    <property type="entry name" value="TACO1_YebC_N"/>
    <property type="match status" value="1"/>
</dbReference>
<dbReference type="Pfam" id="PF01709">
    <property type="entry name" value="Transcrip_reg"/>
    <property type="match status" value="1"/>
</dbReference>
<dbReference type="SUPFAM" id="SSF75625">
    <property type="entry name" value="YebC-like"/>
    <property type="match status" value="1"/>
</dbReference>
<keyword id="KW-0963">Cytoplasm</keyword>
<keyword id="KW-0238">DNA-binding</keyword>
<keyword id="KW-0804">Transcription</keyword>
<keyword id="KW-0805">Transcription regulation</keyword>